<keyword id="KW-0067">ATP-binding</keyword>
<keyword id="KW-0150">Chloroplast</keyword>
<keyword id="KW-0275">Fatty acid biosynthesis</keyword>
<keyword id="KW-0276">Fatty acid metabolism</keyword>
<keyword id="KW-0444">Lipid biosynthesis</keyword>
<keyword id="KW-0443">Lipid metabolism</keyword>
<keyword id="KW-0479">Metal-binding</keyword>
<keyword id="KW-0547">Nucleotide-binding</keyword>
<keyword id="KW-0934">Plastid</keyword>
<keyword id="KW-0808">Transferase</keyword>
<keyword id="KW-0862">Zinc</keyword>
<keyword id="KW-0863">Zinc-finger</keyword>
<protein>
    <recommendedName>
        <fullName evidence="2">Acetyl-coenzyme A carboxylase carboxyl transferase subunit beta, chloroplastic</fullName>
        <shortName evidence="2">ACCase subunit beta</shortName>
        <shortName evidence="2">Acetyl-CoA carboxylase carboxyltransferase subunit beta</shortName>
        <ecNumber evidence="2">2.1.3.15</ecNumber>
    </recommendedName>
</protein>
<name>ACCD_CHLVU</name>
<sequence length="411" mass="46548">MSILSWIENQRKLKLLNAPKYNHPESDVSQGLWTRCDHCGVILYIKHLKENQRVCFGCGYHLQMSSTERIESLVDANTWRPFDEMVSPCDPLEFRDQKAYTERLKDAQERTGLQDAVQTGTGLLDGIPIALGVMDFHFMGGSMGSVVGEKITRLIEYATQEGLPVILVCASGGARMQEGILSLMQMAKISAALHIHQNCAKLLYISVLTSPTTGGVTASFAMLGDLLFAEPKALIGFAGRRVIEQTLQEQLPDDFQTAEYLLHHGLLDLIVPRSFLKQALSETLTLYKEAPLKEQGRIPYGERGPLTKTREEQLRRFLKSSKTPEYLHIVNDLKELLGFLGQTQTTLYPEKLEFLNNLKTQEQFLQKNDNFFEELLTSTTVKKALNLACGTQTRLNWLNYKLTEFRIRPKF</sequence>
<organism>
    <name type="scientific">Chlorella vulgaris</name>
    <name type="common">Green alga</name>
    <dbReference type="NCBI Taxonomy" id="3077"/>
    <lineage>
        <taxon>Eukaryota</taxon>
        <taxon>Viridiplantae</taxon>
        <taxon>Chlorophyta</taxon>
        <taxon>core chlorophytes</taxon>
        <taxon>Trebouxiophyceae</taxon>
        <taxon>Chlorellales</taxon>
        <taxon>Chlorellaceae</taxon>
        <taxon>Chlorella clade</taxon>
        <taxon>Chlorella</taxon>
    </lineage>
</organism>
<geneLocation type="chloroplast"/>
<feature type="chain" id="PRO_0000199782" description="Acetyl-coenzyme A carboxylase carboxyl transferase subunit beta, chloroplastic">
    <location>
        <begin position="1"/>
        <end position="411"/>
    </location>
</feature>
<feature type="domain" description="CoA carboxyltransferase N-terminal" evidence="3">
    <location>
        <begin position="32"/>
        <end position="302"/>
    </location>
</feature>
<feature type="zinc finger region" description="C4-type" evidence="2">
    <location>
        <begin position="36"/>
        <end position="58"/>
    </location>
</feature>
<feature type="binding site" evidence="2">
    <location>
        <position position="36"/>
    </location>
    <ligand>
        <name>Zn(2+)</name>
        <dbReference type="ChEBI" id="CHEBI:29105"/>
    </ligand>
</feature>
<feature type="binding site" evidence="2">
    <location>
        <position position="39"/>
    </location>
    <ligand>
        <name>Zn(2+)</name>
        <dbReference type="ChEBI" id="CHEBI:29105"/>
    </ligand>
</feature>
<feature type="binding site" evidence="2">
    <location>
        <position position="55"/>
    </location>
    <ligand>
        <name>Zn(2+)</name>
        <dbReference type="ChEBI" id="CHEBI:29105"/>
    </ligand>
</feature>
<feature type="binding site" evidence="2">
    <location>
        <position position="58"/>
    </location>
    <ligand>
        <name>Zn(2+)</name>
        <dbReference type="ChEBI" id="CHEBI:29105"/>
    </ligand>
</feature>
<reference key="1">
    <citation type="journal article" date="1997" name="Proc. Natl. Acad. Sci. U.S.A.">
        <title>Complete nucleotide sequence of the chloroplast genome from the green alga Chlorella vulgaris: the existence of genes possibly involved in chloroplast division.</title>
        <authorList>
            <person name="Wakasugi T."/>
            <person name="Nagai T."/>
            <person name="Kapoor M."/>
            <person name="Sugita M."/>
            <person name="Ito M."/>
            <person name="Ito S."/>
            <person name="Tsudzuki J."/>
            <person name="Nakashima K."/>
            <person name="Tsudzuki T."/>
            <person name="Suzuki Y."/>
            <person name="Hamada A."/>
            <person name="Ohta T."/>
            <person name="Inamura A."/>
            <person name="Yoshinaga K."/>
            <person name="Sugiura M."/>
        </authorList>
    </citation>
    <scope>NUCLEOTIDE SEQUENCE [LARGE SCALE GENOMIC DNA]</scope>
    <source>
        <strain>IAM C-27 / Tamiya</strain>
    </source>
</reference>
<comment type="function">
    <text evidence="2">Component of the acetyl coenzyme A carboxylase (ACC) complex. Biotin carboxylase (BC) catalyzes the carboxylation of biotin on its carrier protein (BCCP) and then the CO(2) group is transferred by the transcarboxylase to acetyl-CoA to form malonyl-CoA.</text>
</comment>
<comment type="catalytic activity">
    <reaction evidence="2">
        <text>N(6)-carboxybiotinyl-L-lysyl-[protein] + acetyl-CoA = N(6)-biotinyl-L-lysyl-[protein] + malonyl-CoA</text>
        <dbReference type="Rhea" id="RHEA:54728"/>
        <dbReference type="Rhea" id="RHEA-COMP:10505"/>
        <dbReference type="Rhea" id="RHEA-COMP:10506"/>
        <dbReference type="ChEBI" id="CHEBI:57288"/>
        <dbReference type="ChEBI" id="CHEBI:57384"/>
        <dbReference type="ChEBI" id="CHEBI:83144"/>
        <dbReference type="ChEBI" id="CHEBI:83145"/>
        <dbReference type="EC" id="2.1.3.15"/>
    </reaction>
</comment>
<comment type="cofactor">
    <cofactor evidence="2">
        <name>Zn(2+)</name>
        <dbReference type="ChEBI" id="CHEBI:29105"/>
    </cofactor>
    <text evidence="2">Binds 1 zinc ion per subunit.</text>
</comment>
<comment type="pathway">
    <text evidence="2">Lipid metabolism; malonyl-CoA biosynthesis; malonyl-CoA from acetyl-CoA: step 1/1.</text>
</comment>
<comment type="subunit">
    <text evidence="1">Acetyl-CoA carboxylase is a heterohexamer composed of biotin carboxyl carrier protein, biotin carboxylase and 2 subunits each of ACCase subunit alpha and ACCase plastid-coded subunit beta (accD).</text>
</comment>
<comment type="subcellular location">
    <subcellularLocation>
        <location evidence="2">Plastid</location>
        <location evidence="2">Chloroplast stroma</location>
    </subcellularLocation>
</comment>
<comment type="similarity">
    <text evidence="2">Belongs to the AccD/PCCB family.</text>
</comment>
<dbReference type="EC" id="2.1.3.15" evidence="2"/>
<dbReference type="EMBL" id="AB001684">
    <property type="protein sequence ID" value="BAA57908.1"/>
    <property type="molecule type" value="Genomic_DNA"/>
</dbReference>
<dbReference type="PIR" id="T07261">
    <property type="entry name" value="T07261"/>
</dbReference>
<dbReference type="RefSeq" id="NP_045833.1">
    <property type="nucleotide sequence ID" value="NC_001865.1"/>
</dbReference>
<dbReference type="SMR" id="P56293"/>
<dbReference type="GeneID" id="809211"/>
<dbReference type="UniPathway" id="UPA00655">
    <property type="reaction ID" value="UER00711"/>
</dbReference>
<dbReference type="GO" id="GO:0009317">
    <property type="term" value="C:acetyl-CoA carboxylase complex"/>
    <property type="evidence" value="ECO:0007669"/>
    <property type="project" value="InterPro"/>
</dbReference>
<dbReference type="GO" id="GO:0009570">
    <property type="term" value="C:chloroplast stroma"/>
    <property type="evidence" value="ECO:0007669"/>
    <property type="project" value="UniProtKB-SubCell"/>
</dbReference>
<dbReference type="GO" id="GO:0003989">
    <property type="term" value="F:acetyl-CoA carboxylase activity"/>
    <property type="evidence" value="ECO:0007669"/>
    <property type="project" value="InterPro"/>
</dbReference>
<dbReference type="GO" id="GO:0005524">
    <property type="term" value="F:ATP binding"/>
    <property type="evidence" value="ECO:0007669"/>
    <property type="project" value="UniProtKB-KW"/>
</dbReference>
<dbReference type="GO" id="GO:0016743">
    <property type="term" value="F:carboxyl- or carbamoyltransferase activity"/>
    <property type="evidence" value="ECO:0007669"/>
    <property type="project" value="UniProtKB-UniRule"/>
</dbReference>
<dbReference type="GO" id="GO:0008270">
    <property type="term" value="F:zinc ion binding"/>
    <property type="evidence" value="ECO:0007669"/>
    <property type="project" value="UniProtKB-UniRule"/>
</dbReference>
<dbReference type="GO" id="GO:0006633">
    <property type="term" value="P:fatty acid biosynthetic process"/>
    <property type="evidence" value="ECO:0007669"/>
    <property type="project" value="UniProtKB-KW"/>
</dbReference>
<dbReference type="GO" id="GO:2001295">
    <property type="term" value="P:malonyl-CoA biosynthetic process"/>
    <property type="evidence" value="ECO:0007669"/>
    <property type="project" value="UniProtKB-UniRule"/>
</dbReference>
<dbReference type="Gene3D" id="3.90.226.10">
    <property type="entry name" value="2-enoyl-CoA Hydratase, Chain A, domain 1"/>
    <property type="match status" value="1"/>
</dbReference>
<dbReference type="HAMAP" id="MF_01395">
    <property type="entry name" value="AcetylCoA_CT_beta"/>
    <property type="match status" value="1"/>
</dbReference>
<dbReference type="InterPro" id="IPR034733">
    <property type="entry name" value="AcCoA_carboxyl_beta"/>
</dbReference>
<dbReference type="InterPro" id="IPR000438">
    <property type="entry name" value="Acetyl_CoA_COase_Trfase_b_su"/>
</dbReference>
<dbReference type="InterPro" id="IPR029045">
    <property type="entry name" value="ClpP/crotonase-like_dom_sf"/>
</dbReference>
<dbReference type="InterPro" id="IPR011762">
    <property type="entry name" value="COA_CT_N"/>
</dbReference>
<dbReference type="NCBIfam" id="TIGR00515">
    <property type="entry name" value="accD"/>
    <property type="match status" value="1"/>
</dbReference>
<dbReference type="PANTHER" id="PTHR42995">
    <property type="entry name" value="ACETYL-COENZYME A CARBOXYLASE CARBOXYL TRANSFERASE SUBUNIT BETA, CHLOROPLASTIC"/>
    <property type="match status" value="1"/>
</dbReference>
<dbReference type="PANTHER" id="PTHR42995:SF5">
    <property type="entry name" value="ACETYL-COENZYME A CARBOXYLASE CARBOXYL TRANSFERASE SUBUNIT BETA, CHLOROPLASTIC"/>
    <property type="match status" value="1"/>
</dbReference>
<dbReference type="Pfam" id="PF01039">
    <property type="entry name" value="Carboxyl_trans"/>
    <property type="match status" value="1"/>
</dbReference>
<dbReference type="PRINTS" id="PR01070">
    <property type="entry name" value="ACCCTRFRASEB"/>
</dbReference>
<dbReference type="SUPFAM" id="SSF52096">
    <property type="entry name" value="ClpP/crotonase"/>
    <property type="match status" value="1"/>
</dbReference>
<dbReference type="PROSITE" id="PS50980">
    <property type="entry name" value="COA_CT_NTER"/>
    <property type="match status" value="1"/>
</dbReference>
<evidence type="ECO:0000250" key="1"/>
<evidence type="ECO:0000255" key="2">
    <source>
        <dbReference type="HAMAP-Rule" id="MF_01395"/>
    </source>
</evidence>
<evidence type="ECO:0000255" key="3">
    <source>
        <dbReference type="PROSITE-ProRule" id="PRU01136"/>
    </source>
</evidence>
<accession>P56293</accession>
<gene>
    <name evidence="2" type="primary">accD</name>
</gene>
<proteinExistence type="inferred from homology"/>